<keyword id="KW-0489">Methyltransferase</keyword>
<keyword id="KW-0949">S-adenosyl-L-methionine</keyword>
<keyword id="KW-0808">Transferase</keyword>
<keyword id="KW-0831">Ubiquinone biosynthesis</keyword>
<evidence type="ECO:0000255" key="1">
    <source>
        <dbReference type="HAMAP-Rule" id="MF_00472"/>
    </source>
</evidence>
<organism>
    <name type="scientific">Escherichia fergusonii (strain ATCC 35469 / DSM 13698 / CCUG 18766 / IAM 14443 / JCM 21226 / LMG 7866 / NBRC 102419 / NCTC 12128 / CDC 0568-73)</name>
    <dbReference type="NCBI Taxonomy" id="585054"/>
    <lineage>
        <taxon>Bacteria</taxon>
        <taxon>Pseudomonadati</taxon>
        <taxon>Pseudomonadota</taxon>
        <taxon>Gammaproteobacteria</taxon>
        <taxon>Enterobacterales</taxon>
        <taxon>Enterobacteriaceae</taxon>
        <taxon>Escherichia</taxon>
    </lineage>
</organism>
<proteinExistence type="inferred from homology"/>
<dbReference type="EC" id="2.1.1.222" evidence="1"/>
<dbReference type="EC" id="2.1.1.64" evidence="1"/>
<dbReference type="EMBL" id="CU928158">
    <property type="protein sequence ID" value="CAQ88468.1"/>
    <property type="molecule type" value="Genomic_DNA"/>
</dbReference>
<dbReference type="RefSeq" id="WP_000990786.1">
    <property type="nucleotide sequence ID" value="NC_011740.1"/>
</dbReference>
<dbReference type="SMR" id="B7LM95"/>
<dbReference type="GeneID" id="75058008"/>
<dbReference type="KEGG" id="efe:EFER_0933"/>
<dbReference type="HOGENOM" id="CLU_042432_5_0_6"/>
<dbReference type="OrthoDB" id="9801538at2"/>
<dbReference type="UniPathway" id="UPA00232"/>
<dbReference type="Proteomes" id="UP000000745">
    <property type="component" value="Chromosome"/>
</dbReference>
<dbReference type="GO" id="GO:0102208">
    <property type="term" value="F:2-polyprenyl-6-hydroxyphenol methylase activity"/>
    <property type="evidence" value="ECO:0007669"/>
    <property type="project" value="UniProtKB-EC"/>
</dbReference>
<dbReference type="GO" id="GO:0061542">
    <property type="term" value="F:3-demethylubiquinol 3-O-methyltransferase activity"/>
    <property type="evidence" value="ECO:0007669"/>
    <property type="project" value="UniProtKB-UniRule"/>
</dbReference>
<dbReference type="GO" id="GO:0010420">
    <property type="term" value="F:polyprenyldihydroxybenzoate methyltransferase activity"/>
    <property type="evidence" value="ECO:0007669"/>
    <property type="project" value="InterPro"/>
</dbReference>
<dbReference type="GO" id="GO:0032259">
    <property type="term" value="P:methylation"/>
    <property type="evidence" value="ECO:0007669"/>
    <property type="project" value="UniProtKB-KW"/>
</dbReference>
<dbReference type="CDD" id="cd02440">
    <property type="entry name" value="AdoMet_MTases"/>
    <property type="match status" value="1"/>
</dbReference>
<dbReference type="FunFam" id="3.40.50.150:FF:000028">
    <property type="entry name" value="Ubiquinone biosynthesis O-methyltransferase"/>
    <property type="match status" value="1"/>
</dbReference>
<dbReference type="Gene3D" id="3.40.50.150">
    <property type="entry name" value="Vaccinia Virus protein VP39"/>
    <property type="match status" value="1"/>
</dbReference>
<dbReference type="HAMAP" id="MF_00472">
    <property type="entry name" value="UbiG"/>
    <property type="match status" value="1"/>
</dbReference>
<dbReference type="InterPro" id="IPR029063">
    <property type="entry name" value="SAM-dependent_MTases_sf"/>
</dbReference>
<dbReference type="InterPro" id="IPR010233">
    <property type="entry name" value="UbiG_MeTrfase"/>
</dbReference>
<dbReference type="NCBIfam" id="TIGR01983">
    <property type="entry name" value="UbiG"/>
    <property type="match status" value="1"/>
</dbReference>
<dbReference type="PANTHER" id="PTHR43464">
    <property type="entry name" value="METHYLTRANSFERASE"/>
    <property type="match status" value="1"/>
</dbReference>
<dbReference type="PANTHER" id="PTHR43464:SF19">
    <property type="entry name" value="UBIQUINONE BIOSYNTHESIS O-METHYLTRANSFERASE, MITOCHONDRIAL"/>
    <property type="match status" value="1"/>
</dbReference>
<dbReference type="Pfam" id="PF13489">
    <property type="entry name" value="Methyltransf_23"/>
    <property type="match status" value="1"/>
</dbReference>
<dbReference type="SUPFAM" id="SSF53335">
    <property type="entry name" value="S-adenosyl-L-methionine-dependent methyltransferases"/>
    <property type="match status" value="1"/>
</dbReference>
<protein>
    <recommendedName>
        <fullName evidence="1">Ubiquinone biosynthesis O-methyltransferase</fullName>
    </recommendedName>
    <alternativeName>
        <fullName evidence="1">2-octaprenyl-6-hydroxyphenol methylase</fullName>
        <ecNumber evidence="1">2.1.1.222</ecNumber>
    </alternativeName>
    <alternativeName>
        <fullName evidence="1">3-demethylubiquinone-8 3-O-methyltransferase</fullName>
        <ecNumber evidence="1">2.1.1.64</ecNumber>
    </alternativeName>
</protein>
<sequence>MNAEKSPVTPNVDHEEIAKFEAVASRWWDLEGEFKPLHRINPLRLGYIAERAGGLFGKKVLDVGCGGGILAESMAREGATVTGLDMGFEPLQVAKLHALESGIQVNYVQETVEEHAAKHAGQYDVVTCMEMLEHVPDPQSVVRACAQLVKPGGDVFFSTLNRNGKSWLMAVVGAEYILRMVPKGTHDVKKFIKPAELLGWVDQTSLKERHMTGLHYNPITNTFKLGPGVDVNYMLHTQNK</sequence>
<gene>
    <name evidence="1" type="primary">ubiG</name>
    <name type="ordered locus">EFER_0933</name>
</gene>
<feature type="chain" id="PRO_1000199686" description="Ubiquinone biosynthesis O-methyltransferase">
    <location>
        <begin position="1"/>
        <end position="240"/>
    </location>
</feature>
<feature type="binding site" evidence="1">
    <location>
        <position position="44"/>
    </location>
    <ligand>
        <name>S-adenosyl-L-methionine</name>
        <dbReference type="ChEBI" id="CHEBI:59789"/>
    </ligand>
</feature>
<feature type="binding site" evidence="1">
    <location>
        <position position="64"/>
    </location>
    <ligand>
        <name>S-adenosyl-L-methionine</name>
        <dbReference type="ChEBI" id="CHEBI:59789"/>
    </ligand>
</feature>
<feature type="binding site" evidence="1">
    <location>
        <position position="85"/>
    </location>
    <ligand>
        <name>S-adenosyl-L-methionine</name>
        <dbReference type="ChEBI" id="CHEBI:59789"/>
    </ligand>
</feature>
<feature type="binding site" evidence="1">
    <location>
        <position position="129"/>
    </location>
    <ligand>
        <name>S-adenosyl-L-methionine</name>
        <dbReference type="ChEBI" id="CHEBI:59789"/>
    </ligand>
</feature>
<reference key="1">
    <citation type="journal article" date="2009" name="PLoS Genet.">
        <title>Organised genome dynamics in the Escherichia coli species results in highly diverse adaptive paths.</title>
        <authorList>
            <person name="Touchon M."/>
            <person name="Hoede C."/>
            <person name="Tenaillon O."/>
            <person name="Barbe V."/>
            <person name="Baeriswyl S."/>
            <person name="Bidet P."/>
            <person name="Bingen E."/>
            <person name="Bonacorsi S."/>
            <person name="Bouchier C."/>
            <person name="Bouvet O."/>
            <person name="Calteau A."/>
            <person name="Chiapello H."/>
            <person name="Clermont O."/>
            <person name="Cruveiller S."/>
            <person name="Danchin A."/>
            <person name="Diard M."/>
            <person name="Dossat C."/>
            <person name="Karoui M.E."/>
            <person name="Frapy E."/>
            <person name="Garry L."/>
            <person name="Ghigo J.M."/>
            <person name="Gilles A.M."/>
            <person name="Johnson J."/>
            <person name="Le Bouguenec C."/>
            <person name="Lescat M."/>
            <person name="Mangenot S."/>
            <person name="Martinez-Jehanne V."/>
            <person name="Matic I."/>
            <person name="Nassif X."/>
            <person name="Oztas S."/>
            <person name="Petit M.A."/>
            <person name="Pichon C."/>
            <person name="Rouy Z."/>
            <person name="Ruf C.S."/>
            <person name="Schneider D."/>
            <person name="Tourret J."/>
            <person name="Vacherie B."/>
            <person name="Vallenet D."/>
            <person name="Medigue C."/>
            <person name="Rocha E.P.C."/>
            <person name="Denamur E."/>
        </authorList>
    </citation>
    <scope>NUCLEOTIDE SEQUENCE [LARGE SCALE GENOMIC DNA]</scope>
    <source>
        <strain>ATCC 35469 / DSM 13698 / BCRC 15582 / CCUG 18766 / IAM 14443 / JCM 21226 / LMG 7866 / NBRC 102419 / NCTC 12128 / CDC 0568-73</strain>
    </source>
</reference>
<comment type="function">
    <text evidence="1">O-methyltransferase that catalyzes the 2 O-methylation steps in the ubiquinone biosynthetic pathway.</text>
</comment>
<comment type="catalytic activity">
    <reaction evidence="1">
        <text>a 3-demethylubiquinol + S-adenosyl-L-methionine = a ubiquinol + S-adenosyl-L-homocysteine + H(+)</text>
        <dbReference type="Rhea" id="RHEA:44380"/>
        <dbReference type="Rhea" id="RHEA-COMP:9566"/>
        <dbReference type="Rhea" id="RHEA-COMP:10914"/>
        <dbReference type="ChEBI" id="CHEBI:15378"/>
        <dbReference type="ChEBI" id="CHEBI:17976"/>
        <dbReference type="ChEBI" id="CHEBI:57856"/>
        <dbReference type="ChEBI" id="CHEBI:59789"/>
        <dbReference type="ChEBI" id="CHEBI:84422"/>
        <dbReference type="EC" id="2.1.1.64"/>
    </reaction>
</comment>
<comment type="catalytic activity">
    <reaction evidence="1">
        <text>a 3-(all-trans-polyprenyl)benzene-1,2-diol + S-adenosyl-L-methionine = a 2-methoxy-6-(all-trans-polyprenyl)phenol + S-adenosyl-L-homocysteine + H(+)</text>
        <dbReference type="Rhea" id="RHEA:31411"/>
        <dbReference type="Rhea" id="RHEA-COMP:9550"/>
        <dbReference type="Rhea" id="RHEA-COMP:9551"/>
        <dbReference type="ChEBI" id="CHEBI:15378"/>
        <dbReference type="ChEBI" id="CHEBI:57856"/>
        <dbReference type="ChEBI" id="CHEBI:59789"/>
        <dbReference type="ChEBI" id="CHEBI:62729"/>
        <dbReference type="ChEBI" id="CHEBI:62731"/>
        <dbReference type="EC" id="2.1.1.222"/>
    </reaction>
</comment>
<comment type="pathway">
    <text evidence="1">Cofactor biosynthesis; ubiquinone biosynthesis.</text>
</comment>
<comment type="similarity">
    <text evidence="1">Belongs to the methyltransferase superfamily. UbiG/COQ3 family.</text>
</comment>
<name>UBIG_ESCF3</name>
<accession>B7LM95</accession>